<feature type="signal peptide" evidence="2">
    <location>
        <begin position="1"/>
        <end position="21"/>
    </location>
</feature>
<feature type="chain" id="PRO_0000031037" description="Roundabout homolog 2">
    <location>
        <begin position="22"/>
        <end position="1470"/>
    </location>
</feature>
<feature type="topological domain" description="Extracellular" evidence="2">
    <location>
        <begin position="22"/>
        <end position="863"/>
    </location>
</feature>
<feature type="transmembrane region" description="Helical" evidence="2">
    <location>
        <begin position="864"/>
        <end position="884"/>
    </location>
</feature>
<feature type="topological domain" description="Cytoplasmic" evidence="2">
    <location>
        <begin position="885"/>
        <end position="1470"/>
    </location>
</feature>
<feature type="domain" description="Ig-like C2-type 1">
    <location>
        <begin position="31"/>
        <end position="127"/>
    </location>
</feature>
<feature type="domain" description="Ig-like C2-type 2">
    <location>
        <begin position="133"/>
        <end position="220"/>
    </location>
</feature>
<feature type="domain" description="Ig-like C2-type 3">
    <location>
        <begin position="225"/>
        <end position="309"/>
    </location>
</feature>
<feature type="domain" description="Ig-like C2-type 4">
    <location>
        <begin position="318"/>
        <end position="413"/>
    </location>
</feature>
<feature type="domain" description="Ig-like C2-type 5">
    <location>
        <begin position="422"/>
        <end position="508"/>
    </location>
</feature>
<feature type="domain" description="Fibronectin type-III 1" evidence="4">
    <location>
        <begin position="528"/>
        <end position="622"/>
    </location>
</feature>
<feature type="domain" description="Fibronectin type-III 2" evidence="4">
    <location>
        <begin position="641"/>
        <end position="739"/>
    </location>
</feature>
<feature type="domain" description="Fibronectin type-III 3" evidence="4">
    <location>
        <begin position="743"/>
        <end position="840"/>
    </location>
</feature>
<feature type="region of interest" description="Disordered" evidence="5">
    <location>
        <begin position="1036"/>
        <end position="1089"/>
    </location>
</feature>
<feature type="region of interest" description="Disordered" evidence="5">
    <location>
        <begin position="1129"/>
        <end position="1159"/>
    </location>
</feature>
<feature type="region of interest" description="Disordered" evidence="5">
    <location>
        <begin position="1190"/>
        <end position="1371"/>
    </location>
</feature>
<feature type="region of interest" description="Disordered" evidence="5">
    <location>
        <begin position="1383"/>
        <end position="1470"/>
    </location>
</feature>
<feature type="compositionally biased region" description="Polar residues" evidence="5">
    <location>
        <begin position="1144"/>
        <end position="1158"/>
    </location>
</feature>
<feature type="compositionally biased region" description="Pro residues" evidence="5">
    <location>
        <begin position="1194"/>
        <end position="1203"/>
    </location>
</feature>
<feature type="compositionally biased region" description="Acidic residues" evidence="5">
    <location>
        <begin position="1215"/>
        <end position="1231"/>
    </location>
</feature>
<feature type="compositionally biased region" description="Polar residues" evidence="5">
    <location>
        <begin position="1243"/>
        <end position="1288"/>
    </location>
</feature>
<feature type="compositionally biased region" description="Pro residues" evidence="5">
    <location>
        <begin position="1315"/>
        <end position="1325"/>
    </location>
</feature>
<feature type="compositionally biased region" description="Polar residues" evidence="5">
    <location>
        <begin position="1328"/>
        <end position="1343"/>
    </location>
</feature>
<feature type="compositionally biased region" description="Low complexity" evidence="5">
    <location>
        <begin position="1413"/>
        <end position="1437"/>
    </location>
</feature>
<feature type="compositionally biased region" description="Polar residues" evidence="5">
    <location>
        <begin position="1461"/>
        <end position="1470"/>
    </location>
</feature>
<feature type="modified residue" description="Phosphothreonine" evidence="9">
    <location>
        <position position="1157"/>
    </location>
</feature>
<feature type="modified residue" description="Phosphoserine" evidence="9">
    <location>
        <position position="1159"/>
    </location>
</feature>
<feature type="glycosylation site" description="N-linked (GlcNAc...) asparagine" evidence="2">
    <location>
        <position position="123"/>
    </location>
</feature>
<feature type="glycosylation site" description="N-linked (GlcNAc...) asparagine" evidence="2">
    <location>
        <position position="430"/>
    </location>
</feature>
<feature type="glycosylation site" description="N-linked (GlcNAc...) asparagine" evidence="2">
    <location>
        <position position="756"/>
    </location>
</feature>
<feature type="glycosylation site" description="N-linked (GlcNAc...) asparagine" evidence="2">
    <location>
        <position position="786"/>
    </location>
</feature>
<feature type="glycosylation site" description="N-linked (GlcNAc...) asparagine" evidence="2">
    <location>
        <position position="793"/>
    </location>
</feature>
<feature type="glycosylation site" description="N-linked (GlcNAc...) asparagine" evidence="2">
    <location>
        <position position="849"/>
    </location>
</feature>
<feature type="disulfide bond" evidence="3">
    <location>
        <begin position="52"/>
        <end position="110"/>
    </location>
</feature>
<feature type="disulfide bond" evidence="3">
    <location>
        <begin position="154"/>
        <end position="203"/>
    </location>
</feature>
<feature type="disulfide bond" evidence="3">
    <location>
        <begin position="246"/>
        <end position="293"/>
    </location>
</feature>
<feature type="disulfide bond" evidence="3">
    <location>
        <begin position="339"/>
        <end position="395"/>
    </location>
</feature>
<feature type="disulfide bond" evidence="3">
    <location>
        <begin position="443"/>
        <end position="492"/>
    </location>
</feature>
<feature type="splice variant" id="VSP_010648" description="In isoform 2." evidence="7">
    <original>GLFPGIQYRVEVAASTSAGVGVKSEPQPIIIGGRNEVVITENNNSITEQITDVVKQPAFIAGIGGACWVILMGFSIWLYWRRKKRKGLSNYAVTFQRGDGGLMSNGSRPGLLNAGDPNYPWLADSWPATSLPVNNSNSGP</original>
    <variation>ASTSRPPEWNYSGI</variation>
    <location>
        <begin position="807"/>
        <end position="946"/>
    </location>
</feature>
<feature type="splice variant" id="VSP_010649" description="In isoform 2." evidence="7">
    <location>
        <begin position="947"/>
        <end position="1470"/>
    </location>
</feature>
<name>ROBO2_MOUSE</name>
<gene>
    <name type="primary">Robo2</name>
    <name type="synonym">Kiaa1568</name>
</gene>
<protein>
    <recommendedName>
        <fullName>Roundabout homolog 2</fullName>
    </recommendedName>
</protein>
<reference key="1">
    <citation type="journal article" date="2004" name="Genome Res.">
        <title>The status, quality, and expansion of the NIH full-length cDNA project: the Mammalian Gene Collection (MGC).</title>
        <authorList>
            <consortium name="The MGC Project Team"/>
        </authorList>
    </citation>
    <scope>NUCLEOTIDE SEQUENCE [LARGE SCALE MRNA] (ISOFORM 2)</scope>
    <source>
        <strain>C57BL/6J</strain>
        <tissue>Brain</tissue>
    </source>
</reference>
<reference key="2">
    <citation type="journal article" date="2003" name="DNA Res.">
        <title>Prediction of the coding sequences of mouse homologues of KIAA gene: III. The complete nucleotide sequences of 500 mouse KIAA-homologous cDNAs identified by screening of terminal sequences of cDNA clones randomly sampled from size-fractionated libraries.</title>
        <authorList>
            <person name="Okazaki N."/>
            <person name="Kikuno R."/>
            <person name="Ohara R."/>
            <person name="Inamoto S."/>
            <person name="Koseki H."/>
            <person name="Hiraoka S."/>
            <person name="Saga Y."/>
            <person name="Nagase T."/>
            <person name="Ohara O."/>
            <person name="Koga H."/>
        </authorList>
    </citation>
    <scope>NUCLEOTIDE SEQUENCE [LARGE SCALE MRNA] OF 679-1470 (ISOFORM 1)</scope>
    <source>
        <tissue>Brain</tissue>
    </source>
</reference>
<reference key="3">
    <citation type="journal article" date="2004" name="Neuron">
        <title>Conserved roles for slit and robo proteins in midline commissural axon guidance.</title>
        <authorList>
            <person name="Long H."/>
            <person name="Sabatier C."/>
            <person name="Ma L."/>
            <person name="Plump A."/>
            <person name="Yuan W."/>
            <person name="Ornitz D.M."/>
            <person name="Tamada A."/>
            <person name="Murakami F."/>
            <person name="Goodman C.S."/>
            <person name="Tessier-Lavigne M."/>
        </authorList>
    </citation>
    <scope>FUNCTION</scope>
    <scope>TISSUE SPECIFICITY</scope>
    <scope>DEVELOPMENTAL STAGE</scope>
    <scope>DISRUPTION PHENOTYPE</scope>
</reference>
<reference key="4">
    <citation type="journal article" date="2010" name="Cell">
        <title>A tissue-specific atlas of mouse protein phosphorylation and expression.</title>
        <authorList>
            <person name="Huttlin E.L."/>
            <person name="Jedrychowski M.P."/>
            <person name="Elias J.E."/>
            <person name="Goswami T."/>
            <person name="Rad R."/>
            <person name="Beausoleil S.A."/>
            <person name="Villen J."/>
            <person name="Haas W."/>
            <person name="Sowa M.E."/>
            <person name="Gygi S.P."/>
        </authorList>
    </citation>
    <scope>PHOSPHORYLATION [LARGE SCALE ANALYSIS] AT THR-1157 AND SER-1159</scope>
    <scope>IDENTIFICATION BY MASS SPECTROMETRY [LARGE SCALE ANALYSIS]</scope>
    <source>
        <tissue>Brain</tissue>
        <tissue>Lung</tissue>
    </source>
</reference>
<proteinExistence type="evidence at protein level"/>
<evidence type="ECO:0000250" key="1"/>
<evidence type="ECO:0000255" key="2"/>
<evidence type="ECO:0000255" key="3">
    <source>
        <dbReference type="PROSITE-ProRule" id="PRU00114"/>
    </source>
</evidence>
<evidence type="ECO:0000255" key="4">
    <source>
        <dbReference type="PROSITE-ProRule" id="PRU00316"/>
    </source>
</evidence>
<evidence type="ECO:0000256" key="5">
    <source>
        <dbReference type="SAM" id="MobiDB-lite"/>
    </source>
</evidence>
<evidence type="ECO:0000269" key="6">
    <source>
    </source>
</evidence>
<evidence type="ECO:0000303" key="7">
    <source>
    </source>
</evidence>
<evidence type="ECO:0000305" key="8"/>
<evidence type="ECO:0007744" key="9">
    <source>
    </source>
</evidence>
<sequence>MNPLMFTLLLLFGFLCIQIDGSRLRQEDFPPRIVEHPSDVIVSKGEPTTLNCKAEGRPTPTIEWYKDGERVETDKDDPRSHRMLLPSGSLFFLRIVHGRRSKPDEGSYVCVARNYLGEAVSRNASLEVALLRDDFRQNPTDVVVAAGEPAILECQPPRGHPEPTIYWKKDKVRIDDKEERISIRGGKLMISNTRKSDAGMYTCVGTNMVGERDSDPAELTVFERPTFLRRPINQVVLEEEAVEFRCQVQGDPQPTVRWKKDDADLPRGRYDIKDDYTLRIKKAMSTDEGTYVCIAENRVGKVEASATLTVRVRPVAPPQFVVRPRDQIVAQGRTVTFPCETKGNPQPAVFWQKEGSQNLLFPNQPQQPNSRCSVSPTGDLTITNIQRSDAGYYICQALTVAGSILAKAQLEVTDVLTDRPPPIILQGPINQTLAVDGTALLKCKATGEPLPVISWLKEGFTFLGRDPRATIQDQGTLQIKNLRISDTGTYTCVATSSSGETSWSAVLDVTESGATISKNYDMNDLPGPPSKPQVTDVSKNSVTLSWQPGTPGVLPASAYIIEAFSQSVSNSWQTVANHVKTTLYTVRGLRPNTIYLFMVRAINPQGLSDPSPMSDPVRTQDISPPAQGVDHRQVQKELGDVVVRLHNPVVLTPTTVQVTWTVDRQPQFIQGYRVMYRQTSGLQASTVWQNLDAKVPTERSAVLVNLKKGVTYEIKVRPYFNEFQGMDSESKTVRTTEEAPSAPPQSVTVLTVGSHNSTSISVSWDPPPADHQNGIIQEYKIWCLGNETRFHINKTVDAAIRSVVIGGLFPGIQYRVEVAASTSAGVGVKSEPQPIIIGGRNEVVITENNNSITEQITDVVKQPAFIAGIGGACWVILMGFSIWLYWRRKKRKGLSNYAVTFQRGDGGLMSNGSRPGLLNAGDPNYPWLADSWPATSLPVNNSNSGPNEIGNFGRGDVLPPVPGQGDKTATMLSDGAIYSSIDFTTKTTYNSSSQITQATPYATTQILHSNSIHELAVDLPDPQWKSSVQQKTDLMGFGYSLPDQNKGNNGGKGGKKKKTKNSSKAQKNNGSTWANVPLPPPPVQPLPGTELGHYAAEQENGYDSDSWCPPLPVQTYLHQGMEDELEEDEDRVPTPPVRGVASSPAISFGQQSTATLTPSPREEMQPMLQAHLDELTRAYQFDIAKQTWHIQSNTPPPQPPAPPLGYVSGALISDLETDVPDEDADDEEEPLEIPRPLRALDQTPGSSMDNLDSSVTGKAFSSSQRQRPTSPFSTDSNTSAAQNQSQRPRPTKKHKGGRMDPQPVLPHRREGMPDDLPPPPDPPPGQGLRQQIGLSQHSGNVENSTERKGSSLERQQAANLEDTKSSLDCPAKTVLEWQRQTQDWINSTERQEETRKAPHKQGVGSEESLVPYSKPSFPSPGGHSSSGTSSSKGSTGPRKADVLRGSHQRNANDLLDIGYVGSNSQGQFTE</sequence>
<accession>Q7TPD3</accession>
<accession>Q8BJ59</accession>
<comment type="function">
    <text evidence="6">Receptor for SLIT2, and probably SLIT1, which are thought to act as molecular guidance cue in cellular migration, including axonal navigation at the ventral midline of the neural tube and projection of axons to different regions during neuronal development.</text>
</comment>
<comment type="subunit">
    <text evidence="1">Interacts with SLIT2.</text>
</comment>
<comment type="subcellular location">
    <subcellularLocation>
        <location evidence="8">Membrane</location>
        <topology evidence="8">Single-pass type I membrane protein</topology>
    </subcellularLocation>
</comment>
<comment type="alternative products">
    <event type="alternative splicing"/>
    <isoform>
        <id>Q7TPD3-1</id>
        <name>1</name>
        <sequence type="displayed"/>
    </isoform>
    <isoform>
        <id>Q7TPD3-2</id>
        <name>2</name>
        <sequence type="described" ref="VSP_010648 VSP_010649"/>
    </isoform>
</comment>
<comment type="tissue specificity">
    <text evidence="6">Expressed in embryonal spinal cord.</text>
</comment>
<comment type="developmental stage">
    <text evidence="6">Expressed at 11.5 dpc in spinal cord.</text>
</comment>
<comment type="disruption phenotype">
    <text evidence="6">Mice show defects in commissural axon guidance in spinal cord including an altered lateral and ventral funiculi projection. The phenotype resembles that of a SLIT1;SLIT2;SLIT3 triple mutant.</text>
</comment>
<comment type="similarity">
    <text evidence="8">Belongs to the immunoglobulin superfamily. ROBO family.</text>
</comment>
<keyword id="KW-0025">Alternative splicing</keyword>
<keyword id="KW-0145">Chemotaxis</keyword>
<keyword id="KW-0217">Developmental protein</keyword>
<keyword id="KW-0221">Differentiation</keyword>
<keyword id="KW-1015">Disulfide bond</keyword>
<keyword id="KW-0325">Glycoprotein</keyword>
<keyword id="KW-0393">Immunoglobulin domain</keyword>
<keyword id="KW-0472">Membrane</keyword>
<keyword id="KW-0524">Neurogenesis</keyword>
<keyword id="KW-0597">Phosphoprotein</keyword>
<keyword id="KW-0675">Receptor</keyword>
<keyword id="KW-1185">Reference proteome</keyword>
<keyword id="KW-0677">Repeat</keyword>
<keyword id="KW-0732">Signal</keyword>
<keyword id="KW-0812">Transmembrane</keyword>
<keyword id="KW-1133">Transmembrane helix</keyword>
<dbReference type="EMBL" id="BC055333">
    <property type="protein sequence ID" value="AAH55333.1"/>
    <property type="molecule type" value="mRNA"/>
</dbReference>
<dbReference type="EMBL" id="AK129396">
    <property type="protein sequence ID" value="BAC98206.1"/>
    <property type="molecule type" value="mRNA"/>
</dbReference>
<dbReference type="RefSeq" id="NP_001401968.1">
    <molecule id="Q7TPD3-1"/>
    <property type="nucleotide sequence ID" value="NM_001415039.1"/>
</dbReference>
<dbReference type="SMR" id="Q7TPD3"/>
<dbReference type="FunCoup" id="Q7TPD3">
    <property type="interactions" value="299"/>
</dbReference>
<dbReference type="IntAct" id="Q7TPD3">
    <property type="interactions" value="1"/>
</dbReference>
<dbReference type="STRING" id="10090.ENSMUSP00000112776"/>
<dbReference type="GlyConnect" id="2688">
    <property type="glycosylation" value="12 N-Linked glycans (2 sites)"/>
</dbReference>
<dbReference type="GlyCosmos" id="Q7TPD3">
    <property type="glycosylation" value="6 sites, 12 glycans"/>
</dbReference>
<dbReference type="GlyGen" id="Q7TPD3">
    <property type="glycosylation" value="9 sites, 15 N-linked glycans (6 sites), 1 O-linked glycan (1 site)"/>
</dbReference>
<dbReference type="iPTMnet" id="Q7TPD3"/>
<dbReference type="PhosphoSitePlus" id="Q7TPD3"/>
<dbReference type="SwissPalm" id="Q7TPD3"/>
<dbReference type="PaxDb" id="10090-ENSMUSP00000112776"/>
<dbReference type="ProteomicsDB" id="300508">
    <molecule id="Q7TPD3-1"/>
</dbReference>
<dbReference type="ProteomicsDB" id="300509">
    <molecule id="Q7TPD3-2"/>
</dbReference>
<dbReference type="ABCD" id="Q7TPD3">
    <property type="antibodies" value="22 sequenced antibodies"/>
</dbReference>
<dbReference type="Ensembl" id="ENSMUST00000227347.3">
    <molecule id="Q7TPD3-1"/>
    <property type="protein sequence ID" value="ENSMUSP00000154010.3"/>
    <property type="gene ID" value="ENSMUSG00000052516.22"/>
</dbReference>
<dbReference type="GeneID" id="268902"/>
<dbReference type="UCSC" id="uc007zrf.1">
    <molecule id="Q7TPD3-1"/>
    <property type="organism name" value="mouse"/>
</dbReference>
<dbReference type="AGR" id="MGI:1890110"/>
<dbReference type="MGI" id="MGI:1890110">
    <property type="gene designation" value="Robo2"/>
</dbReference>
<dbReference type="eggNOG" id="KOG4222">
    <property type="taxonomic scope" value="Eukaryota"/>
</dbReference>
<dbReference type="GeneTree" id="ENSGT00940000156324"/>
<dbReference type="InParanoid" id="Q7TPD3"/>
<dbReference type="CD-CODE" id="CE726F99">
    <property type="entry name" value="Postsynaptic density"/>
</dbReference>
<dbReference type="ChiTaRS" id="Robo2">
    <property type="organism name" value="mouse"/>
</dbReference>
<dbReference type="PRO" id="PR:Q7TPD3"/>
<dbReference type="Proteomes" id="UP000000589">
    <property type="component" value="Unplaced"/>
</dbReference>
<dbReference type="RNAct" id="Q7TPD3">
    <property type="molecule type" value="protein"/>
</dbReference>
<dbReference type="GO" id="GO:0030673">
    <property type="term" value="C:axolemma"/>
    <property type="evidence" value="ECO:0000314"/>
    <property type="project" value="MGI"/>
</dbReference>
<dbReference type="GO" id="GO:0009986">
    <property type="term" value="C:cell surface"/>
    <property type="evidence" value="ECO:0000250"/>
    <property type="project" value="UniProtKB"/>
</dbReference>
<dbReference type="GO" id="GO:0098978">
    <property type="term" value="C:glutamatergic synapse"/>
    <property type="evidence" value="ECO:0000314"/>
    <property type="project" value="SynGO"/>
</dbReference>
<dbReference type="GO" id="GO:0005886">
    <property type="term" value="C:plasma membrane"/>
    <property type="evidence" value="ECO:0000304"/>
    <property type="project" value="Reactome"/>
</dbReference>
<dbReference type="GO" id="GO:0098839">
    <property type="term" value="C:postsynaptic density membrane"/>
    <property type="evidence" value="ECO:0000314"/>
    <property type="project" value="SynGO"/>
</dbReference>
<dbReference type="GO" id="GO:0042802">
    <property type="term" value="F:identical protein binding"/>
    <property type="evidence" value="ECO:0000250"/>
    <property type="project" value="UniProtKB"/>
</dbReference>
<dbReference type="GO" id="GO:0035904">
    <property type="term" value="P:aorta development"/>
    <property type="evidence" value="ECO:0000316"/>
    <property type="project" value="BHF-UCL"/>
</dbReference>
<dbReference type="GO" id="GO:0003180">
    <property type="term" value="P:aortic valve morphogenesis"/>
    <property type="evidence" value="ECO:0000316"/>
    <property type="project" value="BHF-UCL"/>
</dbReference>
<dbReference type="GO" id="GO:0007411">
    <property type="term" value="P:axon guidance"/>
    <property type="evidence" value="ECO:0000315"/>
    <property type="project" value="MGI"/>
</dbReference>
<dbReference type="GO" id="GO:0016199">
    <property type="term" value="P:axon midline choice point recognition"/>
    <property type="evidence" value="ECO:0000316"/>
    <property type="project" value="UniProtKB"/>
</dbReference>
<dbReference type="GO" id="GO:0007420">
    <property type="term" value="P:brain development"/>
    <property type="evidence" value="ECO:0000250"/>
    <property type="project" value="UniProtKB"/>
</dbReference>
<dbReference type="GO" id="GO:0006935">
    <property type="term" value="P:chemotaxis"/>
    <property type="evidence" value="ECO:0007669"/>
    <property type="project" value="UniProtKB-KW"/>
</dbReference>
<dbReference type="GO" id="GO:0003272">
    <property type="term" value="P:endocardial cushion formation"/>
    <property type="evidence" value="ECO:0000316"/>
    <property type="project" value="BHF-UCL"/>
</dbReference>
<dbReference type="GO" id="GO:0003129">
    <property type="term" value="P:heart induction"/>
    <property type="evidence" value="ECO:0000314"/>
    <property type="project" value="BHF-UCL"/>
</dbReference>
<dbReference type="GO" id="GO:0007156">
    <property type="term" value="P:homophilic cell adhesion via plasma membrane adhesion molecules"/>
    <property type="evidence" value="ECO:0000250"/>
    <property type="project" value="UniProtKB"/>
</dbReference>
<dbReference type="GO" id="GO:0001656">
    <property type="term" value="P:metanephros development"/>
    <property type="evidence" value="ECO:0000315"/>
    <property type="project" value="MGI"/>
</dbReference>
<dbReference type="GO" id="GO:0021891">
    <property type="term" value="P:olfactory bulb interneuron development"/>
    <property type="evidence" value="ECO:0000315"/>
    <property type="project" value="UniProtKB"/>
</dbReference>
<dbReference type="GO" id="GO:0003148">
    <property type="term" value="P:outflow tract septum morphogenesis"/>
    <property type="evidence" value="ECO:0000316"/>
    <property type="project" value="BHF-UCL"/>
</dbReference>
<dbReference type="GO" id="GO:0050772">
    <property type="term" value="P:positive regulation of axonogenesis"/>
    <property type="evidence" value="ECO:0000250"/>
    <property type="project" value="UniProtKB"/>
</dbReference>
<dbReference type="GO" id="GO:0045747">
    <property type="term" value="P:positive regulation of Notch signaling pathway"/>
    <property type="evidence" value="ECO:0000314"/>
    <property type="project" value="BHF-UCL"/>
</dbReference>
<dbReference type="GO" id="GO:0003184">
    <property type="term" value="P:pulmonary valve morphogenesis"/>
    <property type="evidence" value="ECO:0000316"/>
    <property type="project" value="BHF-UCL"/>
</dbReference>
<dbReference type="GO" id="GO:0031290">
    <property type="term" value="P:retinal ganglion cell axon guidance"/>
    <property type="evidence" value="ECO:0000315"/>
    <property type="project" value="UniProtKB"/>
</dbReference>
<dbReference type="GO" id="GO:0060074">
    <property type="term" value="P:synapse maturation"/>
    <property type="evidence" value="ECO:0000314"/>
    <property type="project" value="SynGO"/>
</dbReference>
<dbReference type="GO" id="GO:0001657">
    <property type="term" value="P:ureteric bud development"/>
    <property type="evidence" value="ECO:0000315"/>
    <property type="project" value="UniProtKB"/>
</dbReference>
<dbReference type="GO" id="GO:0060412">
    <property type="term" value="P:ventricular septum morphogenesis"/>
    <property type="evidence" value="ECO:0000316"/>
    <property type="project" value="BHF-UCL"/>
</dbReference>
<dbReference type="CDD" id="cd00063">
    <property type="entry name" value="FN3"/>
    <property type="match status" value="3"/>
</dbReference>
<dbReference type="CDD" id="cd07693">
    <property type="entry name" value="IgC_1_Robo"/>
    <property type="match status" value="1"/>
</dbReference>
<dbReference type="CDD" id="cd05726">
    <property type="entry name" value="IgI_4_Robo"/>
    <property type="match status" value="1"/>
</dbReference>
<dbReference type="CDD" id="cd20952">
    <property type="entry name" value="IgI_5_Robo"/>
    <property type="match status" value="1"/>
</dbReference>
<dbReference type="FunFam" id="2.60.40.10:FF:000053">
    <property type="entry name" value="Roundabout guidance receptor 1"/>
    <property type="match status" value="1"/>
</dbReference>
<dbReference type="FunFam" id="2.60.40.10:FF:000055">
    <property type="entry name" value="roundabout homolog 1 isoform X2"/>
    <property type="match status" value="1"/>
</dbReference>
<dbReference type="FunFam" id="2.60.40.10:FF:000065">
    <property type="entry name" value="roundabout homolog 1 isoform X3"/>
    <property type="match status" value="1"/>
</dbReference>
<dbReference type="FunFam" id="2.60.40.10:FF:000026">
    <property type="entry name" value="roundabout homolog 2 isoform X1"/>
    <property type="match status" value="1"/>
</dbReference>
<dbReference type="FunFam" id="2.60.40.10:FF:000008">
    <property type="entry name" value="roundabout homolog 2 isoform X2"/>
    <property type="match status" value="2"/>
</dbReference>
<dbReference type="FunFam" id="2.60.40.10:FF:000043">
    <property type="entry name" value="roundabout homolog 2 isoform X2"/>
    <property type="match status" value="1"/>
</dbReference>
<dbReference type="FunFam" id="2.60.40.10:FF:000058">
    <property type="entry name" value="roundabout homolog 2 isoform X3"/>
    <property type="match status" value="1"/>
</dbReference>
<dbReference type="Gene3D" id="2.60.40.10">
    <property type="entry name" value="Immunoglobulins"/>
    <property type="match status" value="8"/>
</dbReference>
<dbReference type="InterPro" id="IPR003961">
    <property type="entry name" value="FN3_dom"/>
</dbReference>
<dbReference type="InterPro" id="IPR036116">
    <property type="entry name" value="FN3_sf"/>
</dbReference>
<dbReference type="InterPro" id="IPR007110">
    <property type="entry name" value="Ig-like_dom"/>
</dbReference>
<dbReference type="InterPro" id="IPR036179">
    <property type="entry name" value="Ig-like_dom_sf"/>
</dbReference>
<dbReference type="InterPro" id="IPR013783">
    <property type="entry name" value="Ig-like_fold"/>
</dbReference>
<dbReference type="InterPro" id="IPR013098">
    <property type="entry name" value="Ig_I-set"/>
</dbReference>
<dbReference type="InterPro" id="IPR003599">
    <property type="entry name" value="Ig_sub"/>
</dbReference>
<dbReference type="InterPro" id="IPR003598">
    <property type="entry name" value="Ig_sub2"/>
</dbReference>
<dbReference type="InterPro" id="IPR013106">
    <property type="entry name" value="Ig_V-set"/>
</dbReference>
<dbReference type="InterPro" id="IPR051170">
    <property type="entry name" value="Neural/epithelial_adhesion"/>
</dbReference>
<dbReference type="PANTHER" id="PTHR12231">
    <property type="entry name" value="CTX-RELATED TYPE I TRANSMEMBRANE PROTEIN"/>
    <property type="match status" value="1"/>
</dbReference>
<dbReference type="PANTHER" id="PTHR12231:SF253">
    <property type="entry name" value="DPR-INTERACTING PROTEIN ETA, ISOFORM B-RELATED"/>
    <property type="match status" value="1"/>
</dbReference>
<dbReference type="Pfam" id="PF00041">
    <property type="entry name" value="fn3"/>
    <property type="match status" value="3"/>
</dbReference>
<dbReference type="Pfam" id="PF07679">
    <property type="entry name" value="I-set"/>
    <property type="match status" value="2"/>
</dbReference>
<dbReference type="Pfam" id="PF13927">
    <property type="entry name" value="Ig_3"/>
    <property type="match status" value="3"/>
</dbReference>
<dbReference type="SMART" id="SM00060">
    <property type="entry name" value="FN3"/>
    <property type="match status" value="3"/>
</dbReference>
<dbReference type="SMART" id="SM00409">
    <property type="entry name" value="IG"/>
    <property type="match status" value="5"/>
</dbReference>
<dbReference type="SMART" id="SM00408">
    <property type="entry name" value="IGc2"/>
    <property type="match status" value="5"/>
</dbReference>
<dbReference type="SMART" id="SM00406">
    <property type="entry name" value="IGv"/>
    <property type="match status" value="3"/>
</dbReference>
<dbReference type="SUPFAM" id="SSF49265">
    <property type="entry name" value="Fibronectin type III"/>
    <property type="match status" value="2"/>
</dbReference>
<dbReference type="SUPFAM" id="SSF48726">
    <property type="entry name" value="Immunoglobulin"/>
    <property type="match status" value="5"/>
</dbReference>
<dbReference type="PROSITE" id="PS50853">
    <property type="entry name" value="FN3"/>
    <property type="match status" value="3"/>
</dbReference>
<dbReference type="PROSITE" id="PS50835">
    <property type="entry name" value="IG_LIKE"/>
    <property type="match status" value="5"/>
</dbReference>
<organism>
    <name type="scientific">Mus musculus</name>
    <name type="common">Mouse</name>
    <dbReference type="NCBI Taxonomy" id="10090"/>
    <lineage>
        <taxon>Eukaryota</taxon>
        <taxon>Metazoa</taxon>
        <taxon>Chordata</taxon>
        <taxon>Craniata</taxon>
        <taxon>Vertebrata</taxon>
        <taxon>Euteleostomi</taxon>
        <taxon>Mammalia</taxon>
        <taxon>Eutheria</taxon>
        <taxon>Euarchontoglires</taxon>
        <taxon>Glires</taxon>
        <taxon>Rodentia</taxon>
        <taxon>Myomorpha</taxon>
        <taxon>Muroidea</taxon>
        <taxon>Muridae</taxon>
        <taxon>Murinae</taxon>
        <taxon>Mus</taxon>
        <taxon>Mus</taxon>
    </lineage>
</organism>